<dbReference type="EC" id="3.6.5.3" evidence="2"/>
<dbReference type="EMBL" id="CP000920">
    <property type="protein sequence ID" value="ACO21124.1"/>
    <property type="molecule type" value="Genomic_DNA"/>
</dbReference>
<dbReference type="RefSeq" id="WP_001040724.1">
    <property type="nucleotide sequence ID" value="NC_012467.1"/>
</dbReference>
<dbReference type="SMR" id="C1CLI6"/>
<dbReference type="GeneID" id="45653269"/>
<dbReference type="KEGG" id="spp:SPP_1507"/>
<dbReference type="HOGENOM" id="CLU_007265_0_1_9"/>
<dbReference type="GO" id="GO:0005829">
    <property type="term" value="C:cytosol"/>
    <property type="evidence" value="ECO:0007669"/>
    <property type="project" value="TreeGrafter"/>
</dbReference>
<dbReference type="GO" id="GO:0005525">
    <property type="term" value="F:GTP binding"/>
    <property type="evidence" value="ECO:0007669"/>
    <property type="project" value="UniProtKB-UniRule"/>
</dbReference>
<dbReference type="GO" id="GO:0003924">
    <property type="term" value="F:GTPase activity"/>
    <property type="evidence" value="ECO:0007669"/>
    <property type="project" value="InterPro"/>
</dbReference>
<dbReference type="GO" id="GO:0003746">
    <property type="term" value="F:translation elongation factor activity"/>
    <property type="evidence" value="ECO:0007669"/>
    <property type="project" value="UniProtKB-UniRule"/>
</dbReference>
<dbReference type="CDD" id="cd01884">
    <property type="entry name" value="EF_Tu"/>
    <property type="match status" value="1"/>
</dbReference>
<dbReference type="CDD" id="cd03697">
    <property type="entry name" value="EFTU_II"/>
    <property type="match status" value="1"/>
</dbReference>
<dbReference type="CDD" id="cd03707">
    <property type="entry name" value="EFTU_III"/>
    <property type="match status" value="1"/>
</dbReference>
<dbReference type="FunFam" id="2.40.30.10:FF:000001">
    <property type="entry name" value="Elongation factor Tu"/>
    <property type="match status" value="1"/>
</dbReference>
<dbReference type="FunFam" id="3.40.50.300:FF:000003">
    <property type="entry name" value="Elongation factor Tu"/>
    <property type="match status" value="1"/>
</dbReference>
<dbReference type="Gene3D" id="3.40.50.300">
    <property type="entry name" value="P-loop containing nucleotide triphosphate hydrolases"/>
    <property type="match status" value="1"/>
</dbReference>
<dbReference type="Gene3D" id="2.40.30.10">
    <property type="entry name" value="Translation factors"/>
    <property type="match status" value="2"/>
</dbReference>
<dbReference type="HAMAP" id="MF_00118_B">
    <property type="entry name" value="EF_Tu_B"/>
    <property type="match status" value="1"/>
</dbReference>
<dbReference type="InterPro" id="IPR041709">
    <property type="entry name" value="EF-Tu_GTP-bd"/>
</dbReference>
<dbReference type="InterPro" id="IPR050055">
    <property type="entry name" value="EF-Tu_GTPase"/>
</dbReference>
<dbReference type="InterPro" id="IPR004161">
    <property type="entry name" value="EFTu-like_2"/>
</dbReference>
<dbReference type="InterPro" id="IPR033720">
    <property type="entry name" value="EFTU_2"/>
</dbReference>
<dbReference type="InterPro" id="IPR031157">
    <property type="entry name" value="G_TR_CS"/>
</dbReference>
<dbReference type="InterPro" id="IPR027417">
    <property type="entry name" value="P-loop_NTPase"/>
</dbReference>
<dbReference type="InterPro" id="IPR005225">
    <property type="entry name" value="Small_GTP-bd"/>
</dbReference>
<dbReference type="InterPro" id="IPR000795">
    <property type="entry name" value="T_Tr_GTP-bd_dom"/>
</dbReference>
<dbReference type="InterPro" id="IPR009000">
    <property type="entry name" value="Transl_B-barrel_sf"/>
</dbReference>
<dbReference type="InterPro" id="IPR009001">
    <property type="entry name" value="Transl_elong_EF1A/Init_IF2_C"/>
</dbReference>
<dbReference type="InterPro" id="IPR004541">
    <property type="entry name" value="Transl_elong_EFTu/EF1A_bac/org"/>
</dbReference>
<dbReference type="InterPro" id="IPR004160">
    <property type="entry name" value="Transl_elong_EFTu/EF1A_C"/>
</dbReference>
<dbReference type="NCBIfam" id="TIGR00485">
    <property type="entry name" value="EF-Tu"/>
    <property type="match status" value="1"/>
</dbReference>
<dbReference type="NCBIfam" id="NF000766">
    <property type="entry name" value="PRK00049.1"/>
    <property type="match status" value="1"/>
</dbReference>
<dbReference type="NCBIfam" id="NF009372">
    <property type="entry name" value="PRK12735.1"/>
    <property type="match status" value="1"/>
</dbReference>
<dbReference type="NCBIfam" id="NF009373">
    <property type="entry name" value="PRK12736.1"/>
    <property type="match status" value="1"/>
</dbReference>
<dbReference type="NCBIfam" id="TIGR00231">
    <property type="entry name" value="small_GTP"/>
    <property type="match status" value="1"/>
</dbReference>
<dbReference type="PANTHER" id="PTHR43721:SF22">
    <property type="entry name" value="ELONGATION FACTOR TU, MITOCHONDRIAL"/>
    <property type="match status" value="1"/>
</dbReference>
<dbReference type="PANTHER" id="PTHR43721">
    <property type="entry name" value="ELONGATION FACTOR TU-RELATED"/>
    <property type="match status" value="1"/>
</dbReference>
<dbReference type="Pfam" id="PF00009">
    <property type="entry name" value="GTP_EFTU"/>
    <property type="match status" value="1"/>
</dbReference>
<dbReference type="Pfam" id="PF03144">
    <property type="entry name" value="GTP_EFTU_D2"/>
    <property type="match status" value="1"/>
</dbReference>
<dbReference type="Pfam" id="PF03143">
    <property type="entry name" value="GTP_EFTU_D3"/>
    <property type="match status" value="1"/>
</dbReference>
<dbReference type="PRINTS" id="PR00315">
    <property type="entry name" value="ELONGATNFCT"/>
</dbReference>
<dbReference type="SUPFAM" id="SSF50465">
    <property type="entry name" value="EF-Tu/eEF-1alpha/eIF2-gamma C-terminal domain"/>
    <property type="match status" value="1"/>
</dbReference>
<dbReference type="SUPFAM" id="SSF52540">
    <property type="entry name" value="P-loop containing nucleoside triphosphate hydrolases"/>
    <property type="match status" value="1"/>
</dbReference>
<dbReference type="SUPFAM" id="SSF50447">
    <property type="entry name" value="Translation proteins"/>
    <property type="match status" value="1"/>
</dbReference>
<dbReference type="PROSITE" id="PS00301">
    <property type="entry name" value="G_TR_1"/>
    <property type="match status" value="1"/>
</dbReference>
<dbReference type="PROSITE" id="PS51722">
    <property type="entry name" value="G_TR_2"/>
    <property type="match status" value="1"/>
</dbReference>
<name>EFTU_STRZP</name>
<evidence type="ECO:0000250" key="1"/>
<evidence type="ECO:0000255" key="2">
    <source>
        <dbReference type="HAMAP-Rule" id="MF_00118"/>
    </source>
</evidence>
<organism>
    <name type="scientific">Streptococcus pneumoniae (strain P1031)</name>
    <dbReference type="NCBI Taxonomy" id="488223"/>
    <lineage>
        <taxon>Bacteria</taxon>
        <taxon>Bacillati</taxon>
        <taxon>Bacillota</taxon>
        <taxon>Bacilli</taxon>
        <taxon>Lactobacillales</taxon>
        <taxon>Streptococcaceae</taxon>
        <taxon>Streptococcus</taxon>
    </lineage>
</organism>
<proteinExistence type="inferred from homology"/>
<reference key="1">
    <citation type="journal article" date="2010" name="Genome Biol.">
        <title>Structure and dynamics of the pan-genome of Streptococcus pneumoniae and closely related species.</title>
        <authorList>
            <person name="Donati C."/>
            <person name="Hiller N.L."/>
            <person name="Tettelin H."/>
            <person name="Muzzi A."/>
            <person name="Croucher N.J."/>
            <person name="Angiuoli S.V."/>
            <person name="Oggioni M."/>
            <person name="Dunning Hotopp J.C."/>
            <person name="Hu F.Z."/>
            <person name="Riley D.R."/>
            <person name="Covacci A."/>
            <person name="Mitchell T.J."/>
            <person name="Bentley S.D."/>
            <person name="Kilian M."/>
            <person name="Ehrlich G.D."/>
            <person name="Rappuoli R."/>
            <person name="Moxon E.R."/>
            <person name="Masignani V."/>
        </authorList>
    </citation>
    <scope>NUCLEOTIDE SEQUENCE [LARGE SCALE GENOMIC DNA]</scope>
    <source>
        <strain>P1031</strain>
    </source>
</reference>
<protein>
    <recommendedName>
        <fullName evidence="2">Elongation factor Tu</fullName>
        <shortName evidence="2">EF-Tu</shortName>
        <ecNumber evidence="2">3.6.5.3</ecNumber>
    </recommendedName>
</protein>
<keyword id="KW-0963">Cytoplasm</keyword>
<keyword id="KW-0251">Elongation factor</keyword>
<keyword id="KW-0342">GTP-binding</keyword>
<keyword id="KW-0378">Hydrolase</keyword>
<keyword id="KW-0460">Magnesium</keyword>
<keyword id="KW-0479">Metal-binding</keyword>
<keyword id="KW-0547">Nucleotide-binding</keyword>
<keyword id="KW-0648">Protein biosynthesis</keyword>
<feature type="chain" id="PRO_1000201416" description="Elongation factor Tu">
    <location>
        <begin position="1"/>
        <end position="398"/>
    </location>
</feature>
<feature type="domain" description="tr-type G">
    <location>
        <begin position="10"/>
        <end position="207"/>
    </location>
</feature>
<feature type="region of interest" description="G1" evidence="1">
    <location>
        <begin position="19"/>
        <end position="26"/>
    </location>
</feature>
<feature type="region of interest" description="G2" evidence="1">
    <location>
        <begin position="63"/>
        <end position="67"/>
    </location>
</feature>
<feature type="region of interest" description="G3" evidence="1">
    <location>
        <begin position="84"/>
        <end position="87"/>
    </location>
</feature>
<feature type="region of interest" description="G4" evidence="1">
    <location>
        <begin position="139"/>
        <end position="142"/>
    </location>
</feature>
<feature type="region of interest" description="G5" evidence="1">
    <location>
        <begin position="177"/>
        <end position="179"/>
    </location>
</feature>
<feature type="binding site" evidence="2">
    <location>
        <begin position="19"/>
        <end position="26"/>
    </location>
    <ligand>
        <name>GTP</name>
        <dbReference type="ChEBI" id="CHEBI:37565"/>
    </ligand>
</feature>
<feature type="binding site" evidence="2">
    <location>
        <position position="26"/>
    </location>
    <ligand>
        <name>Mg(2+)</name>
        <dbReference type="ChEBI" id="CHEBI:18420"/>
    </ligand>
</feature>
<feature type="binding site" evidence="2">
    <location>
        <begin position="84"/>
        <end position="88"/>
    </location>
    <ligand>
        <name>GTP</name>
        <dbReference type="ChEBI" id="CHEBI:37565"/>
    </ligand>
</feature>
<feature type="binding site" evidence="2">
    <location>
        <begin position="139"/>
        <end position="142"/>
    </location>
    <ligand>
        <name>GTP</name>
        <dbReference type="ChEBI" id="CHEBI:37565"/>
    </ligand>
</feature>
<comment type="function">
    <text evidence="2">GTP hydrolase that promotes the GTP-dependent binding of aminoacyl-tRNA to the A-site of ribosomes during protein biosynthesis.</text>
</comment>
<comment type="catalytic activity">
    <reaction evidence="2">
        <text>GTP + H2O = GDP + phosphate + H(+)</text>
        <dbReference type="Rhea" id="RHEA:19669"/>
        <dbReference type="ChEBI" id="CHEBI:15377"/>
        <dbReference type="ChEBI" id="CHEBI:15378"/>
        <dbReference type="ChEBI" id="CHEBI:37565"/>
        <dbReference type="ChEBI" id="CHEBI:43474"/>
        <dbReference type="ChEBI" id="CHEBI:58189"/>
        <dbReference type="EC" id="3.6.5.3"/>
    </reaction>
    <physiologicalReaction direction="left-to-right" evidence="2">
        <dbReference type="Rhea" id="RHEA:19670"/>
    </physiologicalReaction>
</comment>
<comment type="subunit">
    <text evidence="2">Monomer.</text>
</comment>
<comment type="subcellular location">
    <subcellularLocation>
        <location evidence="2">Cytoplasm</location>
    </subcellularLocation>
</comment>
<comment type="similarity">
    <text evidence="2">Belongs to the TRAFAC class translation factor GTPase superfamily. Classic translation factor GTPase family. EF-Tu/EF-1A subfamily.</text>
</comment>
<gene>
    <name evidence="2" type="primary">tuf</name>
    <name type="ordered locus">SPP_1507</name>
</gene>
<accession>C1CLI6</accession>
<sequence>MAKEKYDRSKPHVNIGTIGHVDHGKTTLTAAITTVLARRLPSSVNQPKDYASIDAAPEERERGITINTAHVEYETEKRHYAHIDAPGHADYVKNMITGAAQMDGAILVVASTDGPMPQTREHILLSRQVGVKHLIVFMNKVDLVDDEELLELVEMEIRDLLSEYDFPGDDLPVIQGSALKALEGDSKYEDIVMELMNTVDEYIPEPERDTDKPLLLPVEDVFSITGRGTVASGRIDRGIVKVNDEIEIVGIKEETQKAVVTGVEMFRKQLDEGLAGDNVGVLLRGVQRDEIERGQVIAKPGSINPHTKFKGEVYILTKEEGGRHTPFFNNYRPQFYFRTTDVTGSIELPAGTEMVMPGDNVTIDVELIHPIAVEQGTTFSIREGGRTVGSGMVTEIEA</sequence>